<accession>P86230</accession>
<protein>
    <recommendedName>
        <fullName evidence="3">Tektin-3</fullName>
    </recommendedName>
</protein>
<name>TEKT3_MESAU</name>
<comment type="function">
    <text evidence="1 3">Microtubule inner protein (MIP) part of the dynein-decorated doublet microtubules (DMTs) in cilia and flagellar axoneme. Forms filamentous polymers in the walls of ciliary and flagellar microtubules (By similarity). Required for normal sperm mobility (By similarity).</text>
</comment>
<comment type="subunit">
    <text evidence="3 4">Microtubule inner protein component of sperm flagellar doublet microtubules (By similarity). Interacts with TEKT1, TEKT2, TEKT4 and TEKT5 (By similarity). Interacts with CCDC38 (By similarity).</text>
</comment>
<comment type="subcellular location">
    <subcellularLocation>
        <location evidence="1">Cytoplasm</location>
        <location evidence="1">Cytoskeleton</location>
        <location evidence="1">Cilium axoneme</location>
    </subcellularLocation>
    <subcellularLocation>
        <location evidence="3">Cytoplasm</location>
        <location evidence="3">Cytoskeleton</location>
        <location evidence="3">Flagellum axoneme</location>
    </subcellularLocation>
    <subcellularLocation>
        <location evidence="1 2">Cytoplasmic vesicle</location>
        <location evidence="1 2">Secretory vesicle</location>
        <location evidence="1 2">Acrosome outer membrane</location>
        <topology evidence="2">Peripheral membrane protein</topology>
    </subcellularLocation>
    <text evidence="1 2 4">In spermatozoa, preferentially localizes to the flagella, but also found in the head (By similarity). In the sperm flagellum, localizes to the periaxonemal region where it associates with the mitochondrial sheath and outer dense fibers (By similarity). Not detected in the central axonemal region of the flagellum (By similarity). Associates with the acrosome membrane in the equatorial segment of the sperm head (By similarity). Also detected just below the plasma membrane in the post-acrosomal region where it might localize to the postacrosomal dense lamina (By similarity). However, other studies report little or no expression in the postacrosomal region (By similarity). Translocates from the postacrosomal region to the equatorial segment after sperm activation (By similarity). Retained in the postacromal region, but not the equatorial segment, following the acrosome reaction (By similarity). Some studies report strong expression in the anterior cap region (By similarity). However, other studies report little or no expression in the acrosomal cap (By similarity).</text>
</comment>
<comment type="PTM">
    <text evidence="1">N- and O-glycosylated.</text>
</comment>
<comment type="PTM">
    <text evidence="1">May be proteolytically processed during the epididymal transit of spermatozoa.</text>
</comment>
<comment type="PTM">
    <text evidence="3">Ubiquitinated, leading to its degradation. Deubiquitinated by USP16, promoting its stability.</text>
</comment>
<comment type="similarity">
    <text evidence="5">Belongs to the tektin family.</text>
</comment>
<sequence length="109" mass="13046">YTPDDWYRLIQDKYQQIRKTQADSTQNLGERVNDIAFWKECLFHREKAIAQLASDRTRRPNIELCRLVNEVYEVDETIQTLQQRLRDSEDTLQSLAHTKANTLYIDQEK</sequence>
<feature type="chain" id="PRO_0000394753" description="Tektin-3">
    <location>
        <begin position="1" status="less than"/>
        <end position="109" status="greater than"/>
    </location>
</feature>
<feature type="non-consecutive residues" evidence="6">
    <location>
        <begin position="8"/>
        <end position="9"/>
    </location>
</feature>
<feature type="non-consecutive residues" evidence="6">
    <location>
        <begin position="39"/>
        <end position="40"/>
    </location>
</feature>
<feature type="non-consecutive residues" evidence="6">
    <location>
        <begin position="47"/>
        <end position="48"/>
    </location>
</feature>
<feature type="non-consecutive residues" evidence="6">
    <location>
        <begin position="56"/>
        <end position="57"/>
    </location>
</feature>
<feature type="non-consecutive residues" evidence="6">
    <location>
        <begin position="66"/>
        <end position="67"/>
    </location>
</feature>
<feature type="non-consecutive residues" evidence="6">
    <location>
        <begin position="99"/>
        <end position="100"/>
    </location>
</feature>
<feature type="non-terminal residue">
    <location>
        <position position="1"/>
    </location>
</feature>
<feature type="non-terminal residue">
    <location>
        <position position="109"/>
    </location>
</feature>
<gene>
    <name evidence="3" type="primary">TEKT3</name>
</gene>
<reference key="1">
    <citation type="journal article" date="2010" name="Asian J. Androl.">
        <title>Glucose-regulated protein precursor (GRP78) and tumor rejection antigen (GP96) are unique to hamster caput epididymal spermatozoa.</title>
        <authorList>
            <person name="Kameshwari D.B."/>
            <person name="Bhande S."/>
            <person name="Sundaram C.S."/>
            <person name="Kota V."/>
            <person name="Siva A.B."/>
            <person name="Shivaji S."/>
        </authorList>
    </citation>
    <scope>IDENTIFICATION BY MASS SPECTROMETRY</scope>
</reference>
<proteinExistence type="evidence at protein level"/>
<organism>
    <name type="scientific">Mesocricetus auratus</name>
    <name type="common">Golden hamster</name>
    <dbReference type="NCBI Taxonomy" id="10036"/>
    <lineage>
        <taxon>Eukaryota</taxon>
        <taxon>Metazoa</taxon>
        <taxon>Chordata</taxon>
        <taxon>Craniata</taxon>
        <taxon>Vertebrata</taxon>
        <taxon>Euteleostomi</taxon>
        <taxon>Mammalia</taxon>
        <taxon>Eutheria</taxon>
        <taxon>Euarchontoglires</taxon>
        <taxon>Glires</taxon>
        <taxon>Rodentia</taxon>
        <taxon>Myomorpha</taxon>
        <taxon>Muroidea</taxon>
        <taxon>Cricetidae</taxon>
        <taxon>Cricetinae</taxon>
        <taxon>Mesocricetus</taxon>
    </lineage>
</organism>
<keyword id="KW-0966">Cell projection</keyword>
<keyword id="KW-0969">Cilium</keyword>
<keyword id="KW-0963">Cytoplasm</keyword>
<keyword id="KW-0968">Cytoplasmic vesicle</keyword>
<keyword id="KW-0206">Cytoskeleton</keyword>
<keyword id="KW-0282">Flagellum</keyword>
<keyword id="KW-0472">Membrane</keyword>
<keyword id="KW-1185">Reference proteome</keyword>
<keyword id="KW-0832">Ubl conjugation</keyword>
<evidence type="ECO:0000250" key="1">
    <source>
        <dbReference type="UniProtKB" id="A6H782"/>
    </source>
</evidence>
<evidence type="ECO:0000250" key="2">
    <source>
        <dbReference type="UniProtKB" id="Q4V8G8"/>
    </source>
</evidence>
<evidence type="ECO:0000250" key="3">
    <source>
        <dbReference type="UniProtKB" id="Q6X6Z7"/>
    </source>
</evidence>
<evidence type="ECO:0000250" key="4">
    <source>
        <dbReference type="UniProtKB" id="Q9BXF9"/>
    </source>
</evidence>
<evidence type="ECO:0000255" key="5"/>
<evidence type="ECO:0000305" key="6"/>
<dbReference type="SMR" id="P86230"/>
<dbReference type="Proteomes" id="UP000189706">
    <property type="component" value="Unplaced"/>
</dbReference>
<dbReference type="GO" id="GO:0001669">
    <property type="term" value="C:acrosomal vesicle"/>
    <property type="evidence" value="ECO:0000250"/>
    <property type="project" value="UniProtKB"/>
</dbReference>
<dbReference type="GO" id="GO:0160111">
    <property type="term" value="C:axonemal A tubule inner sheath"/>
    <property type="evidence" value="ECO:0000250"/>
    <property type="project" value="UniProtKB"/>
</dbReference>
<dbReference type="GO" id="GO:0005879">
    <property type="term" value="C:axonemal microtubule"/>
    <property type="evidence" value="ECO:0000250"/>
    <property type="project" value="UniProtKB"/>
</dbReference>
<dbReference type="GO" id="GO:0005634">
    <property type="term" value="C:nucleus"/>
    <property type="evidence" value="ECO:0007669"/>
    <property type="project" value="TreeGrafter"/>
</dbReference>
<dbReference type="GO" id="GO:0002081">
    <property type="term" value="C:outer acrosomal membrane"/>
    <property type="evidence" value="ECO:0007669"/>
    <property type="project" value="UniProtKB-SubCell"/>
</dbReference>
<dbReference type="GO" id="GO:0036126">
    <property type="term" value="C:sperm flagellum"/>
    <property type="evidence" value="ECO:0000250"/>
    <property type="project" value="UniProtKB"/>
</dbReference>
<dbReference type="GO" id="GO:0060271">
    <property type="term" value="P:cilium assembly"/>
    <property type="evidence" value="ECO:0007669"/>
    <property type="project" value="TreeGrafter"/>
</dbReference>
<dbReference type="GO" id="GO:0030317">
    <property type="term" value="P:flagellated sperm motility"/>
    <property type="evidence" value="ECO:0000250"/>
    <property type="project" value="UniProtKB"/>
</dbReference>
<dbReference type="InterPro" id="IPR048256">
    <property type="entry name" value="Tektin-like"/>
</dbReference>
<dbReference type="InterPro" id="IPR000435">
    <property type="entry name" value="Tektins"/>
</dbReference>
<dbReference type="PANTHER" id="PTHR19960">
    <property type="entry name" value="TEKTIN"/>
    <property type="match status" value="1"/>
</dbReference>
<dbReference type="PANTHER" id="PTHR19960:SF24">
    <property type="entry name" value="TEKTIN-3"/>
    <property type="match status" value="1"/>
</dbReference>
<dbReference type="Pfam" id="PF03148">
    <property type="entry name" value="Tektin"/>
    <property type="match status" value="1"/>
</dbReference>